<organism>
    <name type="scientific">Vicia faba</name>
    <name type="common">Broad bean</name>
    <name type="synonym">Faba vulgaris</name>
    <dbReference type="NCBI Taxonomy" id="3906"/>
    <lineage>
        <taxon>Eukaryota</taxon>
        <taxon>Viridiplantae</taxon>
        <taxon>Streptophyta</taxon>
        <taxon>Embryophyta</taxon>
        <taxon>Tracheophyta</taxon>
        <taxon>Spermatophyta</taxon>
        <taxon>Magnoliopsida</taxon>
        <taxon>eudicotyledons</taxon>
        <taxon>Gunneridae</taxon>
        <taxon>Pentapetalae</taxon>
        <taxon>rosids</taxon>
        <taxon>fabids</taxon>
        <taxon>Fabales</taxon>
        <taxon>Fabaceae</taxon>
        <taxon>Papilionoideae</taxon>
        <taxon>50 kb inversion clade</taxon>
        <taxon>NPAAA clade</taxon>
        <taxon>Hologalegina</taxon>
        <taxon>IRL clade</taxon>
        <taxon>Fabeae</taxon>
        <taxon>Vicia</taxon>
    </lineage>
</organism>
<protein>
    <recommendedName>
        <fullName>Defensin-like protein 1</fullName>
    </recommendedName>
    <alternativeName>
        <fullName>Fabatin-1</fullName>
    </alternativeName>
</protein>
<proteinExistence type="evidence at protein level"/>
<evidence type="ECO:0000250" key="1"/>
<evidence type="ECO:0000305" key="2"/>
<sequence length="47" mass="5229">LLGRCKVKSNRFHGPCLTDTHCSTVCRGEGYKGGDCHGLRRRCMCLC</sequence>
<accession>P81456</accession>
<keyword id="KW-0044">Antibiotic</keyword>
<keyword id="KW-0929">Antimicrobial</keyword>
<keyword id="KW-0903">Direct protein sequencing</keyword>
<keyword id="KW-1015">Disulfide bond</keyword>
<keyword id="KW-0295">Fungicide</keyword>
<keyword id="KW-0611">Plant defense</keyword>
<reference key="1">
    <citation type="journal article" date="1997" name="FEMS Microbiol. Lett.">
        <title>Fabatins: new antimicrobial plant peptides.</title>
        <authorList>
            <person name="Zhang Y."/>
            <person name="Lewis K."/>
        </authorList>
    </citation>
    <scope>PROTEIN SEQUENCE</scope>
    <source>
        <tissue>Seed</tissue>
    </source>
</reference>
<comment type="function">
    <text>Fabatins have antibacterial activity against Gram-positive and Gram-negative bacteria. High activity against P.aeruginosa. No activity against S.cerevisiae and C.albicans.</text>
</comment>
<comment type="similarity">
    <text evidence="2">Belongs to the DEFL family.</text>
</comment>
<feature type="chain" id="PRO_0000074258" description="Defensin-like protein 1">
    <location>
        <begin position="1"/>
        <end position="47"/>
    </location>
</feature>
<feature type="disulfide bond" evidence="1">
    <location>
        <begin position="5"/>
        <end position="47"/>
    </location>
</feature>
<feature type="disulfide bond" evidence="1">
    <location>
        <begin position="16"/>
        <end position="36"/>
    </location>
</feature>
<feature type="disulfide bond" evidence="1">
    <location>
        <begin position="22"/>
        <end position="43"/>
    </location>
</feature>
<feature type="disulfide bond" evidence="1">
    <location>
        <begin position="26"/>
        <end position="45"/>
    </location>
</feature>
<dbReference type="PIR" id="A58445">
    <property type="entry name" value="A58445"/>
</dbReference>
<dbReference type="SMR" id="P81456"/>
<dbReference type="GO" id="GO:0042742">
    <property type="term" value="P:defense response to bacterium"/>
    <property type="evidence" value="ECO:0007669"/>
    <property type="project" value="UniProtKB-KW"/>
</dbReference>
<dbReference type="GO" id="GO:0050832">
    <property type="term" value="P:defense response to fungus"/>
    <property type="evidence" value="ECO:0007669"/>
    <property type="project" value="UniProtKB-KW"/>
</dbReference>
<dbReference type="GO" id="GO:0031640">
    <property type="term" value="P:killing of cells of another organism"/>
    <property type="evidence" value="ECO:0007669"/>
    <property type="project" value="UniProtKB-KW"/>
</dbReference>
<dbReference type="CDD" id="cd00107">
    <property type="entry name" value="Knot1"/>
    <property type="match status" value="1"/>
</dbReference>
<dbReference type="Gene3D" id="3.30.30.10">
    <property type="entry name" value="Knottin, scorpion toxin-like"/>
    <property type="match status" value="1"/>
</dbReference>
<dbReference type="InterPro" id="IPR008176">
    <property type="entry name" value="Defensin_plant"/>
</dbReference>
<dbReference type="InterPro" id="IPR003614">
    <property type="entry name" value="Scorpion_toxin-like"/>
</dbReference>
<dbReference type="InterPro" id="IPR036574">
    <property type="entry name" value="Scorpion_toxin-like_sf"/>
</dbReference>
<dbReference type="Pfam" id="PF00304">
    <property type="entry name" value="Gamma-thionin"/>
    <property type="match status" value="1"/>
</dbReference>
<dbReference type="PRINTS" id="PR00288">
    <property type="entry name" value="PUROTHIONIN"/>
</dbReference>
<dbReference type="SMART" id="SM00505">
    <property type="entry name" value="Knot1"/>
    <property type="match status" value="1"/>
</dbReference>
<dbReference type="SUPFAM" id="SSF57095">
    <property type="entry name" value="Scorpion toxin-like"/>
    <property type="match status" value="1"/>
</dbReference>
<dbReference type="PROSITE" id="PS00940">
    <property type="entry name" value="GAMMA_THIONIN"/>
    <property type="match status" value="1"/>
</dbReference>
<name>DEF1_VICFA</name>